<gene>
    <name type="primary">CRK14</name>
    <name type="ordered locus">At4g23220</name>
    <name type="ORF">F21P8.110</name>
</gene>
<comment type="catalytic activity">
    <reaction>
        <text>L-seryl-[protein] + ATP = O-phospho-L-seryl-[protein] + ADP + H(+)</text>
        <dbReference type="Rhea" id="RHEA:17989"/>
        <dbReference type="Rhea" id="RHEA-COMP:9863"/>
        <dbReference type="Rhea" id="RHEA-COMP:11604"/>
        <dbReference type="ChEBI" id="CHEBI:15378"/>
        <dbReference type="ChEBI" id="CHEBI:29999"/>
        <dbReference type="ChEBI" id="CHEBI:30616"/>
        <dbReference type="ChEBI" id="CHEBI:83421"/>
        <dbReference type="ChEBI" id="CHEBI:456216"/>
    </reaction>
</comment>
<comment type="catalytic activity">
    <reaction>
        <text>L-threonyl-[protein] + ATP = O-phospho-L-threonyl-[protein] + ADP + H(+)</text>
        <dbReference type="Rhea" id="RHEA:46608"/>
        <dbReference type="Rhea" id="RHEA-COMP:11060"/>
        <dbReference type="Rhea" id="RHEA-COMP:11605"/>
        <dbReference type="ChEBI" id="CHEBI:15378"/>
        <dbReference type="ChEBI" id="CHEBI:30013"/>
        <dbReference type="ChEBI" id="CHEBI:30616"/>
        <dbReference type="ChEBI" id="CHEBI:61977"/>
        <dbReference type="ChEBI" id="CHEBI:456216"/>
    </reaction>
</comment>
<comment type="subcellular location">
    <subcellularLocation>
        <location evidence="7">Membrane</location>
        <topology evidence="7">Single-pass membrane protein</topology>
    </subcellularLocation>
</comment>
<comment type="alternative products">
    <event type="alternative splicing"/>
    <isoform>
        <id>Q8H199-1</id>
        <name>1</name>
        <sequence type="displayed"/>
    </isoform>
    <isoform>
        <id>Q8H199-2</id>
        <name>2</name>
        <sequence type="described" ref="VSP_026691 VSP_026692"/>
    </isoform>
</comment>
<comment type="miscellaneous">
    <molecule>Isoform 2</molecule>
    <text evidence="7">May be due to intron retention.</text>
</comment>
<comment type="similarity">
    <text evidence="3">Belongs to the protein kinase superfamily. Ser/Thr protein kinase family. CRK subfamily.</text>
</comment>
<comment type="sequence caution" evidence="7">
    <conflict type="frameshift">
        <sequence resource="EMBL-CDS" id="AAK62391"/>
    </conflict>
</comment>
<comment type="sequence caution" evidence="7">
    <conflict type="miscellaneous discrepancy">
        <sequence resource="EMBL-CDS" id="AAK62391"/>
    </conflict>
    <text>Sequencing errors.</text>
</comment>
<comment type="sequence caution" evidence="7">
    <conflict type="erroneous gene model prediction">
        <sequence resource="EMBL-CDS" id="CAA18469"/>
    </conflict>
</comment>
<comment type="sequence caution" evidence="7">
    <conflict type="frameshift">
        <sequence resource="EMBL-CDS" id="CAA18469"/>
    </conflict>
</comment>
<comment type="sequence caution" evidence="7">
    <conflict type="erroneous gene model prediction">
        <sequence resource="EMBL-CDS" id="CAB79277"/>
    </conflict>
</comment>
<comment type="sequence caution" evidence="7">
    <conflict type="frameshift">
        <sequence resource="EMBL-CDS" id="CAB79277"/>
    </conflict>
</comment>
<proteinExistence type="evidence at transcript level"/>
<reference key="1">
    <citation type="journal article" date="1999" name="Nature">
        <title>Sequence and analysis of chromosome 4 of the plant Arabidopsis thaliana.</title>
        <authorList>
            <person name="Mayer K.F.X."/>
            <person name="Schueller C."/>
            <person name="Wambutt R."/>
            <person name="Murphy G."/>
            <person name="Volckaert G."/>
            <person name="Pohl T."/>
            <person name="Duesterhoeft A."/>
            <person name="Stiekema W."/>
            <person name="Entian K.-D."/>
            <person name="Terryn N."/>
            <person name="Harris B."/>
            <person name="Ansorge W."/>
            <person name="Brandt P."/>
            <person name="Grivell L.A."/>
            <person name="Rieger M."/>
            <person name="Weichselgartner M."/>
            <person name="de Simone V."/>
            <person name="Obermaier B."/>
            <person name="Mache R."/>
            <person name="Mueller M."/>
            <person name="Kreis M."/>
            <person name="Delseny M."/>
            <person name="Puigdomenech P."/>
            <person name="Watson M."/>
            <person name="Schmidtheini T."/>
            <person name="Reichert B."/>
            <person name="Portetelle D."/>
            <person name="Perez-Alonso M."/>
            <person name="Boutry M."/>
            <person name="Bancroft I."/>
            <person name="Vos P."/>
            <person name="Hoheisel J."/>
            <person name="Zimmermann W."/>
            <person name="Wedler H."/>
            <person name="Ridley P."/>
            <person name="Langham S.-A."/>
            <person name="McCullagh B."/>
            <person name="Bilham L."/>
            <person name="Robben J."/>
            <person name="van der Schueren J."/>
            <person name="Grymonprez B."/>
            <person name="Chuang Y.-J."/>
            <person name="Vandenbussche F."/>
            <person name="Braeken M."/>
            <person name="Weltjens I."/>
            <person name="Voet M."/>
            <person name="Bastiaens I."/>
            <person name="Aert R."/>
            <person name="Defoor E."/>
            <person name="Weitzenegger T."/>
            <person name="Bothe G."/>
            <person name="Ramsperger U."/>
            <person name="Hilbert H."/>
            <person name="Braun M."/>
            <person name="Holzer E."/>
            <person name="Brandt A."/>
            <person name="Peters S."/>
            <person name="van Staveren M."/>
            <person name="Dirkse W."/>
            <person name="Mooijman P."/>
            <person name="Klein Lankhorst R."/>
            <person name="Rose M."/>
            <person name="Hauf J."/>
            <person name="Koetter P."/>
            <person name="Berneiser S."/>
            <person name="Hempel S."/>
            <person name="Feldpausch M."/>
            <person name="Lamberth S."/>
            <person name="Van den Daele H."/>
            <person name="De Keyser A."/>
            <person name="Buysshaert C."/>
            <person name="Gielen J."/>
            <person name="Villarroel R."/>
            <person name="De Clercq R."/>
            <person name="van Montagu M."/>
            <person name="Rogers J."/>
            <person name="Cronin A."/>
            <person name="Quail M.A."/>
            <person name="Bray-Allen S."/>
            <person name="Clark L."/>
            <person name="Doggett J."/>
            <person name="Hall S."/>
            <person name="Kay M."/>
            <person name="Lennard N."/>
            <person name="McLay K."/>
            <person name="Mayes R."/>
            <person name="Pettett A."/>
            <person name="Rajandream M.A."/>
            <person name="Lyne M."/>
            <person name="Benes V."/>
            <person name="Rechmann S."/>
            <person name="Borkova D."/>
            <person name="Bloecker H."/>
            <person name="Scharfe M."/>
            <person name="Grimm M."/>
            <person name="Loehnert T.-H."/>
            <person name="Dose S."/>
            <person name="de Haan M."/>
            <person name="Maarse A.C."/>
            <person name="Schaefer M."/>
            <person name="Mueller-Auer S."/>
            <person name="Gabel C."/>
            <person name="Fuchs M."/>
            <person name="Fartmann B."/>
            <person name="Granderath K."/>
            <person name="Dauner D."/>
            <person name="Herzl A."/>
            <person name="Neumann S."/>
            <person name="Argiriou A."/>
            <person name="Vitale D."/>
            <person name="Liguori R."/>
            <person name="Piravandi E."/>
            <person name="Massenet O."/>
            <person name="Quigley F."/>
            <person name="Clabauld G."/>
            <person name="Muendlein A."/>
            <person name="Felber R."/>
            <person name="Schnabl S."/>
            <person name="Hiller R."/>
            <person name="Schmidt W."/>
            <person name="Lecharny A."/>
            <person name="Aubourg S."/>
            <person name="Chefdor F."/>
            <person name="Cooke R."/>
            <person name="Berger C."/>
            <person name="Monfort A."/>
            <person name="Casacuberta E."/>
            <person name="Gibbons T."/>
            <person name="Weber N."/>
            <person name="Vandenbol M."/>
            <person name="Bargues M."/>
            <person name="Terol J."/>
            <person name="Torres A."/>
            <person name="Perez-Perez A."/>
            <person name="Purnelle B."/>
            <person name="Bent E."/>
            <person name="Johnson S."/>
            <person name="Tacon D."/>
            <person name="Jesse T."/>
            <person name="Heijnen L."/>
            <person name="Schwarz S."/>
            <person name="Scholler P."/>
            <person name="Heber S."/>
            <person name="Francs P."/>
            <person name="Bielke C."/>
            <person name="Frishman D."/>
            <person name="Haase D."/>
            <person name="Lemcke K."/>
            <person name="Mewes H.-W."/>
            <person name="Stocker S."/>
            <person name="Zaccaria P."/>
            <person name="Bevan M."/>
            <person name="Wilson R.K."/>
            <person name="de la Bastide M."/>
            <person name="Habermann K."/>
            <person name="Parnell L."/>
            <person name="Dedhia N."/>
            <person name="Gnoj L."/>
            <person name="Schutz K."/>
            <person name="Huang E."/>
            <person name="Spiegel L."/>
            <person name="Sekhon M."/>
            <person name="Murray J."/>
            <person name="Sheet P."/>
            <person name="Cordes M."/>
            <person name="Abu-Threideh J."/>
            <person name="Stoneking T."/>
            <person name="Kalicki J."/>
            <person name="Graves T."/>
            <person name="Harmon G."/>
            <person name="Edwards J."/>
            <person name="Latreille P."/>
            <person name="Courtney L."/>
            <person name="Cloud J."/>
            <person name="Abbott A."/>
            <person name="Scott K."/>
            <person name="Johnson D."/>
            <person name="Minx P."/>
            <person name="Bentley D."/>
            <person name="Fulton B."/>
            <person name="Miller N."/>
            <person name="Greco T."/>
            <person name="Kemp K."/>
            <person name="Kramer J."/>
            <person name="Fulton L."/>
            <person name="Mardis E."/>
            <person name="Dante M."/>
            <person name="Pepin K."/>
            <person name="Hillier L.W."/>
            <person name="Nelson J."/>
            <person name="Spieth J."/>
            <person name="Ryan E."/>
            <person name="Andrews S."/>
            <person name="Geisel C."/>
            <person name="Layman D."/>
            <person name="Du H."/>
            <person name="Ali J."/>
            <person name="Berghoff A."/>
            <person name="Jones K."/>
            <person name="Drone K."/>
            <person name="Cotton M."/>
            <person name="Joshu C."/>
            <person name="Antonoiu B."/>
            <person name="Zidanic M."/>
            <person name="Strong C."/>
            <person name="Sun H."/>
            <person name="Lamar B."/>
            <person name="Yordan C."/>
            <person name="Ma P."/>
            <person name="Zhong J."/>
            <person name="Preston R."/>
            <person name="Vil D."/>
            <person name="Shekher M."/>
            <person name="Matero A."/>
            <person name="Shah R."/>
            <person name="Swaby I.K."/>
            <person name="O'Shaughnessy A."/>
            <person name="Rodriguez M."/>
            <person name="Hoffman J."/>
            <person name="Till S."/>
            <person name="Granat S."/>
            <person name="Shohdy N."/>
            <person name="Hasegawa A."/>
            <person name="Hameed A."/>
            <person name="Lodhi M."/>
            <person name="Johnson A."/>
            <person name="Chen E."/>
            <person name="Marra M.A."/>
            <person name="Martienssen R."/>
            <person name="McCombie W.R."/>
        </authorList>
    </citation>
    <scope>NUCLEOTIDE SEQUENCE [LARGE SCALE GENOMIC DNA]</scope>
    <source>
        <strain>cv. Columbia</strain>
    </source>
</reference>
<reference key="2">
    <citation type="journal article" date="2017" name="Plant J.">
        <title>Araport11: a complete reannotation of the Arabidopsis thaliana reference genome.</title>
        <authorList>
            <person name="Cheng C.Y."/>
            <person name="Krishnakumar V."/>
            <person name="Chan A.P."/>
            <person name="Thibaud-Nissen F."/>
            <person name="Schobel S."/>
            <person name="Town C.D."/>
        </authorList>
    </citation>
    <scope>GENOME REANNOTATION</scope>
    <source>
        <strain>cv. Columbia</strain>
    </source>
</reference>
<reference key="3">
    <citation type="journal article" date="2002" name="Science">
        <title>Functional annotation of a full-length Arabidopsis cDNA collection.</title>
        <authorList>
            <person name="Seki M."/>
            <person name="Narusaka M."/>
            <person name="Kamiya A."/>
            <person name="Ishida J."/>
            <person name="Satou M."/>
            <person name="Sakurai T."/>
            <person name="Nakajima M."/>
            <person name="Enju A."/>
            <person name="Akiyama K."/>
            <person name="Oono Y."/>
            <person name="Muramatsu M."/>
            <person name="Hayashizaki Y."/>
            <person name="Kawai J."/>
            <person name="Carninci P."/>
            <person name="Itoh M."/>
            <person name="Ishii Y."/>
            <person name="Arakawa T."/>
            <person name="Shibata K."/>
            <person name="Shinagawa A."/>
            <person name="Shinozaki K."/>
        </authorList>
    </citation>
    <scope>NUCLEOTIDE SEQUENCE [LARGE SCALE MRNA] (ISOFORM 2)</scope>
    <source>
        <strain>cv. Columbia</strain>
    </source>
</reference>
<reference key="4">
    <citation type="journal article" date="2003" name="Science">
        <title>Empirical analysis of transcriptional activity in the Arabidopsis genome.</title>
        <authorList>
            <person name="Yamada K."/>
            <person name="Lim J."/>
            <person name="Dale J.M."/>
            <person name="Chen H."/>
            <person name="Shinn P."/>
            <person name="Palm C.J."/>
            <person name="Southwick A.M."/>
            <person name="Wu H.C."/>
            <person name="Kim C.J."/>
            <person name="Nguyen M."/>
            <person name="Pham P.K."/>
            <person name="Cheuk R.F."/>
            <person name="Karlin-Newmann G."/>
            <person name="Liu S.X."/>
            <person name="Lam B."/>
            <person name="Sakano H."/>
            <person name="Wu T."/>
            <person name="Yu G."/>
            <person name="Miranda M."/>
            <person name="Quach H.L."/>
            <person name="Tripp M."/>
            <person name="Chang C.H."/>
            <person name="Lee J.M."/>
            <person name="Toriumi M.J."/>
            <person name="Chan M.M."/>
            <person name="Tang C.C."/>
            <person name="Onodera C.S."/>
            <person name="Deng J.M."/>
            <person name="Akiyama K."/>
            <person name="Ansari Y."/>
            <person name="Arakawa T."/>
            <person name="Banh J."/>
            <person name="Banno F."/>
            <person name="Bowser L."/>
            <person name="Brooks S.Y."/>
            <person name="Carninci P."/>
            <person name="Chao Q."/>
            <person name="Choy N."/>
            <person name="Enju A."/>
            <person name="Goldsmith A.D."/>
            <person name="Gurjal M."/>
            <person name="Hansen N.F."/>
            <person name="Hayashizaki Y."/>
            <person name="Johnson-Hopson C."/>
            <person name="Hsuan V.W."/>
            <person name="Iida K."/>
            <person name="Karnes M."/>
            <person name="Khan S."/>
            <person name="Koesema E."/>
            <person name="Ishida J."/>
            <person name="Jiang P.X."/>
            <person name="Jones T."/>
            <person name="Kawai J."/>
            <person name="Kamiya A."/>
            <person name="Meyers C."/>
            <person name="Nakajima M."/>
            <person name="Narusaka M."/>
            <person name="Seki M."/>
            <person name="Sakurai T."/>
            <person name="Satou M."/>
            <person name="Tamse R."/>
            <person name="Vaysberg M."/>
            <person name="Wallender E.K."/>
            <person name="Wong C."/>
            <person name="Yamamura Y."/>
            <person name="Yuan S."/>
            <person name="Shinozaki K."/>
            <person name="Davis R.W."/>
            <person name="Theologis A."/>
            <person name="Ecker J.R."/>
        </authorList>
    </citation>
    <scope>NUCLEOTIDE SEQUENCE [LARGE SCALE MRNA] (ISOFORM 1)</scope>
    <source>
        <strain>cv. Columbia</strain>
    </source>
</reference>
<reference key="5">
    <citation type="journal article" date="2001" name="Plant Physiol.">
        <title>A superfamily of proteins with novel cysteine-rich repeats.</title>
        <authorList>
            <person name="Chen Z."/>
        </authorList>
    </citation>
    <scope>GENE FAMILY ORGANIZATION</scope>
    <scope>NOMENCLATURE</scope>
</reference>
<sequence length="658" mass="73938">MELKNLFPIFWFVLVGFAVVSAQECGKTGFFVPQSRYETNRGLLLSSLPSNVSARGGFYNSSIGQGPDRVYALGMCIEGAEPDVCSDCIEYASNLLLDTCLNQTEGLAWPEKRILCMVRYSNSSFFGSLKAEPHFYIHNVDDITSNLTEFDQVWEELARRMIASTTSPSSKRKYYAADVAALTAFQIIYALMQCTPDLSLEDCHICLRQSVGDYETCCNGKQGGIVYRASCVFRWELFPFSEAFSRISLAPPPQSPAFPTLPAVTNTATKKGSITISIGIVWAIIIPTVIVVFLVLLALGFVVYRRRKSYQGSSTDITITHSLQFDFKAIEDATNKFSESNIIGRGGFGEVFMGVLNGTEVAIKRLSKASRQGAREFKNEVVVVAKLHHRNLVKLLGFCLEGEEKILVYEFVPNKSLDYFLFDPTKQGQLDWTKRYNIIRGITRGILYLHQDSRLTIIHRDLKASNILLDADMNPKIADFGMARIFGIDQSGANTKKIAGTRGYMPPEYVRQGQFSTRSDVYSFGVLVLEIICGRNNRFIHQSDTTVENLVTYAWRLWRNDSPLELVDPTISENCETEEVTRCIHIALLCVQHNPTDRPSLSTINMMLINNSYVLPDPQQPGFFFPIISNQERDGLDSMNRSNPQTINDVTITDFEPR</sequence>
<protein>
    <recommendedName>
        <fullName>Cysteine-rich receptor-like protein kinase 14</fullName>
        <shortName>Cysteine-rich RLK14</shortName>
        <ecNumber>2.7.11.-</ecNumber>
    </recommendedName>
</protein>
<evidence type="ECO:0000250" key="1">
    <source>
        <dbReference type="UniProtKB" id="O48814"/>
    </source>
</evidence>
<evidence type="ECO:0000255" key="2"/>
<evidence type="ECO:0000255" key="3">
    <source>
        <dbReference type="PROSITE-ProRule" id="PRU00159"/>
    </source>
</evidence>
<evidence type="ECO:0000255" key="4">
    <source>
        <dbReference type="PROSITE-ProRule" id="PRU00806"/>
    </source>
</evidence>
<evidence type="ECO:0000255" key="5">
    <source>
        <dbReference type="PROSITE-ProRule" id="PRU10027"/>
    </source>
</evidence>
<evidence type="ECO:0000303" key="6">
    <source>
    </source>
</evidence>
<evidence type="ECO:0000305" key="7"/>
<accession>Q8H199</accession>
<accession>F4JNG7</accession>
<accession>O65474</accession>
<accession>Q8GYB6</accession>
<accession>Q94F24</accession>
<organism>
    <name type="scientific">Arabidopsis thaliana</name>
    <name type="common">Mouse-ear cress</name>
    <dbReference type="NCBI Taxonomy" id="3702"/>
    <lineage>
        <taxon>Eukaryota</taxon>
        <taxon>Viridiplantae</taxon>
        <taxon>Streptophyta</taxon>
        <taxon>Embryophyta</taxon>
        <taxon>Tracheophyta</taxon>
        <taxon>Spermatophyta</taxon>
        <taxon>Magnoliopsida</taxon>
        <taxon>eudicotyledons</taxon>
        <taxon>Gunneridae</taxon>
        <taxon>Pentapetalae</taxon>
        <taxon>rosids</taxon>
        <taxon>malvids</taxon>
        <taxon>Brassicales</taxon>
        <taxon>Brassicaceae</taxon>
        <taxon>Camelineae</taxon>
        <taxon>Arabidopsis</taxon>
    </lineage>
</organism>
<name>CRK14_ARATH</name>
<keyword id="KW-0025">Alternative splicing</keyword>
<keyword id="KW-0067">ATP-binding</keyword>
<keyword id="KW-0325">Glycoprotein</keyword>
<keyword id="KW-0418">Kinase</keyword>
<keyword id="KW-0472">Membrane</keyword>
<keyword id="KW-0547">Nucleotide-binding</keyword>
<keyword id="KW-0597">Phosphoprotein</keyword>
<keyword id="KW-0675">Receptor</keyword>
<keyword id="KW-1185">Reference proteome</keyword>
<keyword id="KW-0677">Repeat</keyword>
<keyword id="KW-0723">Serine/threonine-protein kinase</keyword>
<keyword id="KW-0732">Signal</keyword>
<keyword id="KW-0808">Transferase</keyword>
<keyword id="KW-0812">Transmembrane</keyword>
<keyword id="KW-1133">Transmembrane helix</keyword>
<dbReference type="EC" id="2.7.11.-"/>
<dbReference type="EMBL" id="AL022347">
    <property type="protein sequence ID" value="CAA18469.1"/>
    <property type="status" value="ALT_SEQ"/>
    <property type="molecule type" value="Genomic_DNA"/>
</dbReference>
<dbReference type="EMBL" id="AL161559">
    <property type="protein sequence ID" value="CAB79277.1"/>
    <property type="status" value="ALT_SEQ"/>
    <property type="molecule type" value="Genomic_DNA"/>
</dbReference>
<dbReference type="EMBL" id="CP002687">
    <property type="protein sequence ID" value="AEE84725.2"/>
    <property type="molecule type" value="Genomic_DNA"/>
</dbReference>
<dbReference type="EMBL" id="AK117741">
    <property type="protein sequence ID" value="BAC42390.1"/>
    <property type="molecule type" value="mRNA"/>
</dbReference>
<dbReference type="EMBL" id="AF386946">
    <property type="protein sequence ID" value="AAK62391.1"/>
    <property type="status" value="ALT_SEQ"/>
    <property type="molecule type" value="mRNA"/>
</dbReference>
<dbReference type="EMBL" id="BT000052">
    <property type="protein sequence ID" value="AAN15371.1"/>
    <property type="molecule type" value="mRNA"/>
</dbReference>
<dbReference type="PIR" id="T04839">
    <property type="entry name" value="T04839"/>
</dbReference>
<dbReference type="RefSeq" id="NP_567680.5">
    <molecule id="Q8H199-1"/>
    <property type="nucleotide sequence ID" value="NM_118451.6"/>
</dbReference>
<dbReference type="SMR" id="Q8H199"/>
<dbReference type="BioGRID" id="13710">
    <property type="interactions" value="33"/>
</dbReference>
<dbReference type="FunCoup" id="Q8H199">
    <property type="interactions" value="154"/>
</dbReference>
<dbReference type="IntAct" id="Q8H199">
    <property type="interactions" value="32"/>
</dbReference>
<dbReference type="STRING" id="3702.Q8H199"/>
<dbReference type="GlyCosmos" id="Q8H199">
    <property type="glycosylation" value="5 sites, No reported glycans"/>
</dbReference>
<dbReference type="GlyGen" id="Q8H199">
    <property type="glycosylation" value="5 sites"/>
</dbReference>
<dbReference type="iPTMnet" id="Q8H199"/>
<dbReference type="PaxDb" id="3702-AT4G23220.1"/>
<dbReference type="ProteomicsDB" id="224543">
    <molecule id="Q8H199-1"/>
</dbReference>
<dbReference type="EnsemblPlants" id="AT4G23220.1">
    <molecule id="Q8H199-1"/>
    <property type="protein sequence ID" value="AT4G23220.1"/>
    <property type="gene ID" value="AT4G23220"/>
</dbReference>
<dbReference type="GeneID" id="828421"/>
<dbReference type="Gramene" id="AT4G23220.1">
    <molecule id="Q8H199-1"/>
    <property type="protein sequence ID" value="AT4G23220.1"/>
    <property type="gene ID" value="AT4G23220"/>
</dbReference>
<dbReference type="KEGG" id="ath:AT4G23220"/>
<dbReference type="Araport" id="AT4G23220"/>
<dbReference type="TAIR" id="AT4G23220">
    <property type="gene designation" value="CRK14"/>
</dbReference>
<dbReference type="eggNOG" id="ENOG502QWDY">
    <property type="taxonomic scope" value="Eukaryota"/>
</dbReference>
<dbReference type="HOGENOM" id="CLU_000288_35_2_1"/>
<dbReference type="InParanoid" id="Q8H199"/>
<dbReference type="OMA" id="AEPHFYI"/>
<dbReference type="PhylomeDB" id="Q8H199"/>
<dbReference type="PRO" id="PR:Q8H199"/>
<dbReference type="Proteomes" id="UP000006548">
    <property type="component" value="Chromosome 4"/>
</dbReference>
<dbReference type="ExpressionAtlas" id="Q8H199">
    <property type="expression patterns" value="baseline and differential"/>
</dbReference>
<dbReference type="GO" id="GO:0016020">
    <property type="term" value="C:membrane"/>
    <property type="evidence" value="ECO:0007669"/>
    <property type="project" value="UniProtKB-SubCell"/>
</dbReference>
<dbReference type="GO" id="GO:0005524">
    <property type="term" value="F:ATP binding"/>
    <property type="evidence" value="ECO:0007669"/>
    <property type="project" value="UniProtKB-KW"/>
</dbReference>
<dbReference type="GO" id="GO:0106310">
    <property type="term" value="F:protein serine kinase activity"/>
    <property type="evidence" value="ECO:0007669"/>
    <property type="project" value="RHEA"/>
</dbReference>
<dbReference type="GO" id="GO:0004674">
    <property type="term" value="F:protein serine/threonine kinase activity"/>
    <property type="evidence" value="ECO:0007669"/>
    <property type="project" value="UniProtKB-KW"/>
</dbReference>
<dbReference type="CDD" id="cd23509">
    <property type="entry name" value="Gnk2-like"/>
    <property type="match status" value="2"/>
</dbReference>
<dbReference type="CDD" id="cd14066">
    <property type="entry name" value="STKc_IRAK"/>
    <property type="match status" value="1"/>
</dbReference>
<dbReference type="FunFam" id="1.10.510.10:FF:000129">
    <property type="entry name" value="cysteine-rich receptor-like protein kinase 10"/>
    <property type="match status" value="1"/>
</dbReference>
<dbReference type="FunFam" id="3.30.430.20:FF:000007">
    <property type="entry name" value="Cysteine-rich receptor-like protein kinase 11"/>
    <property type="match status" value="1"/>
</dbReference>
<dbReference type="FunFam" id="3.30.430.20:FF:000003">
    <property type="entry name" value="Cysteine-rich RLK (RECEPTOR-like protein kinase) 10"/>
    <property type="match status" value="1"/>
</dbReference>
<dbReference type="FunFam" id="3.30.200.20:FF:000727">
    <property type="entry name" value="Cysteine-rich RLK (RECEPTOR-like protein kinase) 23"/>
    <property type="match status" value="1"/>
</dbReference>
<dbReference type="Gene3D" id="3.30.430.20">
    <property type="entry name" value="Gnk2 domain, C-X8-C-X2-C motif"/>
    <property type="match status" value="2"/>
</dbReference>
<dbReference type="Gene3D" id="3.30.200.20">
    <property type="entry name" value="Phosphorylase Kinase, domain 1"/>
    <property type="match status" value="1"/>
</dbReference>
<dbReference type="Gene3D" id="1.10.510.10">
    <property type="entry name" value="Transferase(Phosphotransferase) domain 1"/>
    <property type="match status" value="1"/>
</dbReference>
<dbReference type="InterPro" id="IPR002902">
    <property type="entry name" value="GNK2"/>
</dbReference>
<dbReference type="InterPro" id="IPR038408">
    <property type="entry name" value="GNK2_sf"/>
</dbReference>
<dbReference type="InterPro" id="IPR011009">
    <property type="entry name" value="Kinase-like_dom_sf"/>
</dbReference>
<dbReference type="InterPro" id="IPR000719">
    <property type="entry name" value="Prot_kinase_dom"/>
</dbReference>
<dbReference type="InterPro" id="IPR017441">
    <property type="entry name" value="Protein_kinase_ATP_BS"/>
</dbReference>
<dbReference type="InterPro" id="IPR008271">
    <property type="entry name" value="Ser/Thr_kinase_AS"/>
</dbReference>
<dbReference type="PANTHER" id="PTHR27002:SF1064">
    <property type="entry name" value="CYSTEINE-RICH RECEPTOR-LIKE PROTEIN KINASE 14-RELATED"/>
    <property type="match status" value="1"/>
</dbReference>
<dbReference type="PANTHER" id="PTHR27002">
    <property type="entry name" value="RECEPTOR-LIKE SERINE/THREONINE-PROTEIN KINASE SD1-8"/>
    <property type="match status" value="1"/>
</dbReference>
<dbReference type="Pfam" id="PF00069">
    <property type="entry name" value="Pkinase"/>
    <property type="match status" value="1"/>
</dbReference>
<dbReference type="Pfam" id="PF01657">
    <property type="entry name" value="Stress-antifung"/>
    <property type="match status" value="2"/>
</dbReference>
<dbReference type="SMART" id="SM00220">
    <property type="entry name" value="S_TKc"/>
    <property type="match status" value="1"/>
</dbReference>
<dbReference type="SUPFAM" id="SSF56112">
    <property type="entry name" value="Protein kinase-like (PK-like)"/>
    <property type="match status" value="1"/>
</dbReference>
<dbReference type="PROSITE" id="PS51473">
    <property type="entry name" value="GNK2"/>
    <property type="match status" value="2"/>
</dbReference>
<dbReference type="PROSITE" id="PS00107">
    <property type="entry name" value="PROTEIN_KINASE_ATP"/>
    <property type="match status" value="1"/>
</dbReference>
<dbReference type="PROSITE" id="PS50011">
    <property type="entry name" value="PROTEIN_KINASE_DOM"/>
    <property type="match status" value="1"/>
</dbReference>
<dbReference type="PROSITE" id="PS00108">
    <property type="entry name" value="PROTEIN_KINASE_ST"/>
    <property type="match status" value="1"/>
</dbReference>
<feature type="signal peptide" evidence="2">
    <location>
        <begin position="1"/>
        <end position="22"/>
    </location>
</feature>
<feature type="chain" id="PRO_0000295061" description="Cysteine-rich receptor-like protein kinase 14">
    <location>
        <begin position="23"/>
        <end position="658"/>
    </location>
</feature>
<feature type="topological domain" description="Extracellular" evidence="2">
    <location>
        <begin position="23"/>
        <end position="277"/>
    </location>
</feature>
<feature type="transmembrane region" description="Helical" evidence="2">
    <location>
        <begin position="278"/>
        <end position="298"/>
    </location>
</feature>
<feature type="topological domain" description="Cytoplasmic" evidence="2">
    <location>
        <begin position="299"/>
        <end position="658"/>
    </location>
</feature>
<feature type="domain" description="Gnk2-homologous 1" evidence="4">
    <location>
        <begin position="23"/>
        <end position="125"/>
    </location>
</feature>
<feature type="domain" description="Gnk2-homologous 2" evidence="4">
    <location>
        <begin position="131"/>
        <end position="240"/>
    </location>
</feature>
<feature type="domain" description="Protein kinase" evidence="3">
    <location>
        <begin position="337"/>
        <end position="614"/>
    </location>
</feature>
<feature type="active site" description="Proton acceptor" evidence="3 5">
    <location>
        <position position="461"/>
    </location>
</feature>
<feature type="binding site" evidence="3">
    <location>
        <begin position="343"/>
        <end position="351"/>
    </location>
    <ligand>
        <name>ATP</name>
        <dbReference type="ChEBI" id="CHEBI:30616"/>
    </ligand>
</feature>
<feature type="binding site" evidence="3">
    <location>
        <position position="364"/>
    </location>
    <ligand>
        <name>ATP</name>
        <dbReference type="ChEBI" id="CHEBI:30616"/>
    </ligand>
</feature>
<feature type="modified residue" description="Phosphotyrosine" evidence="1">
    <location>
        <position position="409"/>
    </location>
</feature>
<feature type="modified residue" description="Phosphoserine" evidence="1">
    <location>
        <position position="465"/>
    </location>
</feature>
<feature type="modified residue" description="Phosphothreonine" evidence="1">
    <location>
        <position position="501"/>
    </location>
</feature>
<feature type="modified residue" description="Phosphotyrosine" evidence="1">
    <location>
        <position position="509"/>
    </location>
</feature>
<feature type="glycosylation site" description="N-linked (GlcNAc...) asparagine" evidence="2">
    <location>
        <position position="51"/>
    </location>
</feature>
<feature type="glycosylation site" description="N-linked (GlcNAc...) asparagine" evidence="2">
    <location>
        <position position="60"/>
    </location>
</feature>
<feature type="glycosylation site" description="N-linked (GlcNAc...) asparagine" evidence="2">
    <location>
        <position position="102"/>
    </location>
</feature>
<feature type="glycosylation site" description="N-linked (GlcNAc...) asparagine" evidence="2">
    <location>
        <position position="122"/>
    </location>
</feature>
<feature type="glycosylation site" description="N-linked (GlcNAc...) asparagine" evidence="2">
    <location>
        <position position="146"/>
    </location>
</feature>
<feature type="splice variant" id="VSP_026691" description="In isoform 2." evidence="6">
    <original>SSTDITITHSLQFDFK</original>
    <variation>ELFCVLSIIFFIICGS</variation>
    <location>
        <begin position="313"/>
        <end position="328"/>
    </location>
</feature>
<feature type="splice variant" id="VSP_026692" description="In isoform 2." evidence="6">
    <location>
        <begin position="329"/>
        <end position="658"/>
    </location>
</feature>